<sequence>MRWSCHPMSSVTSRLRSATADTFALVVYCFFTGMAIEILLSGMSLQQSLSSRVLAIPVNVIIAWPFGQYRDAVVSLASRHGPKQFWTRNLADLLAMSVFNHRSMRRFFLRWGWSGGSCSRRWSAMR</sequence>
<reference key="1">
    <citation type="journal article" date="2006" name="Genome Res.">
        <title>Massive genome erosion and functional adaptations provide insights into the symbiotic lifestyle of Sodalis glossinidius in the tsetse host.</title>
        <authorList>
            <person name="Toh H."/>
            <person name="Weiss B.L."/>
            <person name="Perkin S.A.H."/>
            <person name="Yamashita A."/>
            <person name="Oshima K."/>
            <person name="Hattori M."/>
            <person name="Aksoy S."/>
        </authorList>
    </citation>
    <scope>NUCLEOTIDE SEQUENCE [LARGE SCALE GENOMIC DNA]</scope>
    <source>
        <strain>morsitans</strain>
    </source>
</reference>
<feature type="chain" id="PRO_0000415630" description="L-alanine exporter AlaE">
    <location>
        <begin position="1"/>
        <end position="126"/>
    </location>
</feature>
<feature type="transmembrane region" description="Helical" evidence="1">
    <location>
        <begin position="23"/>
        <end position="43"/>
    </location>
</feature>
<proteinExistence type="inferred from homology"/>
<keyword id="KW-0029">Amino-acid transport</keyword>
<keyword id="KW-0997">Cell inner membrane</keyword>
<keyword id="KW-1003">Cell membrane</keyword>
<keyword id="KW-0472">Membrane</keyword>
<keyword id="KW-0812">Transmembrane</keyword>
<keyword id="KW-1133">Transmembrane helix</keyword>
<keyword id="KW-0813">Transport</keyword>
<gene>
    <name evidence="1" type="primary">alaE</name>
    <name type="ordered locus">SG0439</name>
</gene>
<dbReference type="EMBL" id="AP008232">
    <property type="protein sequence ID" value="BAE73714.1"/>
    <property type="molecule type" value="Genomic_DNA"/>
</dbReference>
<dbReference type="KEGG" id="sgl:SG0439"/>
<dbReference type="eggNOG" id="ENOG502ZRFS">
    <property type="taxonomic scope" value="Bacteria"/>
</dbReference>
<dbReference type="HOGENOM" id="CLU_1980099_0_0_6"/>
<dbReference type="Proteomes" id="UP000001932">
    <property type="component" value="Chromosome"/>
</dbReference>
<dbReference type="GO" id="GO:0005886">
    <property type="term" value="C:plasma membrane"/>
    <property type="evidence" value="ECO:0007669"/>
    <property type="project" value="UniProtKB-SubCell"/>
</dbReference>
<dbReference type="GO" id="GO:0034639">
    <property type="term" value="F:L-amino acid efflux transmembrane transporter activity"/>
    <property type="evidence" value="ECO:0007669"/>
    <property type="project" value="UniProtKB-UniRule"/>
</dbReference>
<dbReference type="GO" id="GO:0032973">
    <property type="term" value="P:amino acid export across plasma membrane"/>
    <property type="evidence" value="ECO:0007669"/>
    <property type="project" value="UniProtKB-UniRule"/>
</dbReference>
<dbReference type="HAMAP" id="MF_00914">
    <property type="entry name" value="L_Ala_exporter"/>
    <property type="match status" value="1"/>
</dbReference>
<dbReference type="InterPro" id="IPR010574">
    <property type="entry name" value="Ala_export_AlaE"/>
</dbReference>
<dbReference type="Pfam" id="PF06610">
    <property type="entry name" value="AlaE"/>
    <property type="match status" value="1"/>
</dbReference>
<protein>
    <recommendedName>
        <fullName evidence="1">L-alanine exporter AlaE</fullName>
    </recommendedName>
</protein>
<comment type="function">
    <text evidence="1">Exports L-alanine.</text>
</comment>
<comment type="subcellular location">
    <subcellularLocation>
        <location evidence="1">Cell inner membrane</location>
        <topology evidence="1">Single-pass membrane protein</topology>
    </subcellularLocation>
</comment>
<comment type="similarity">
    <text evidence="1">Belongs to the AlaE exporter family.</text>
</comment>
<accession>Q2NVW1</accession>
<organism>
    <name type="scientific">Sodalis glossinidius (strain morsitans)</name>
    <dbReference type="NCBI Taxonomy" id="343509"/>
    <lineage>
        <taxon>Bacteria</taxon>
        <taxon>Pseudomonadati</taxon>
        <taxon>Pseudomonadota</taxon>
        <taxon>Gammaproteobacteria</taxon>
        <taxon>Enterobacterales</taxon>
        <taxon>Bruguierivoracaceae</taxon>
        <taxon>Sodalis</taxon>
    </lineage>
</organism>
<name>ALAE_SODGM</name>
<evidence type="ECO:0000255" key="1">
    <source>
        <dbReference type="HAMAP-Rule" id="MF_00914"/>
    </source>
</evidence>